<accession>A1TPY4</accession>
<proteinExistence type="inferred from homology"/>
<evidence type="ECO:0000255" key="1">
    <source>
        <dbReference type="HAMAP-Rule" id="MF_00679"/>
    </source>
</evidence>
<gene>
    <name evidence="1" type="primary">hscA</name>
    <name type="ordered locus">Aave_2447</name>
</gene>
<name>HSCA_PARC0</name>
<comment type="function">
    <text evidence="1">Chaperone involved in the maturation of iron-sulfur cluster-containing proteins. Has a low intrinsic ATPase activity which is markedly stimulated by HscB.</text>
</comment>
<comment type="similarity">
    <text evidence="1">Belongs to the heat shock protein 70 family.</text>
</comment>
<sequence>MALLQISEPGQSPNPHQRRIAVGIDLGTTHSLVAAVRNGAAECLPDAEGRLLLPSVVRYLPQGRRQIGYAAMDSRSEDAANTLVSVKRFMGRGLKDIDHPERLPYAFVPGQEGDMVAMQTVDGVKSPVEVSAEILAELRHRAEDTFDEDLYGAVITVPAYFDDAQRQATKDAARLAGLNLLRLINEPTAAAIAYGLDNASEGVYAVYDLGGGTFDISILRLTQGVFEVIATGGDSALGGDDYDAVLAEWALQRLGIRAESAQDKAAARIAARACKEGLTAAESALFSARIGGNEVRLDVLRGDFDAITSALTERTLAAVRRALRDARLQREDIQGVVMVGGSTRMPQIQRAVAAFFGTEPLNNLNPDEVVALGAAIQAHQLAGNDPAGDMLLLDVIPLSLGIETMGGLVERIISRNETIPTAKAQDFTTYKDGQTALAIHVVQGERDLVADCRSLARFELRGIPPMAAGAARIRVTFTVDADGLLGVSAREQSTGVEARVDVKPSYGLSDDQIARMLQEGFATAGEDMRARALVEARVEADRMLMATRTALEADGDILPPGERQSIDVLVQALEAVREHEDASAIDAATQALARGTEAFAARRMNRGIQQALAGKSVQSL</sequence>
<feature type="chain" id="PRO_1000044837" description="Chaperone protein HscA homolog">
    <location>
        <begin position="1"/>
        <end position="620"/>
    </location>
</feature>
<protein>
    <recommendedName>
        <fullName evidence="1">Chaperone protein HscA homolog</fullName>
    </recommendedName>
</protein>
<reference key="1">
    <citation type="submission" date="2006-12" db="EMBL/GenBank/DDBJ databases">
        <title>Complete sequence of Acidovorax avenae subsp. citrulli AAC00-1.</title>
        <authorList>
            <person name="Copeland A."/>
            <person name="Lucas S."/>
            <person name="Lapidus A."/>
            <person name="Barry K."/>
            <person name="Detter J.C."/>
            <person name="Glavina del Rio T."/>
            <person name="Dalin E."/>
            <person name="Tice H."/>
            <person name="Pitluck S."/>
            <person name="Kiss H."/>
            <person name="Brettin T."/>
            <person name="Bruce D."/>
            <person name="Han C."/>
            <person name="Tapia R."/>
            <person name="Gilna P."/>
            <person name="Schmutz J."/>
            <person name="Larimer F."/>
            <person name="Land M."/>
            <person name="Hauser L."/>
            <person name="Kyrpides N."/>
            <person name="Kim E."/>
            <person name="Stahl D."/>
            <person name="Richardson P."/>
        </authorList>
    </citation>
    <scope>NUCLEOTIDE SEQUENCE [LARGE SCALE GENOMIC DNA]</scope>
    <source>
        <strain>AAC00-1</strain>
    </source>
</reference>
<dbReference type="EMBL" id="CP000512">
    <property type="protein sequence ID" value="ABM33022.1"/>
    <property type="molecule type" value="Genomic_DNA"/>
</dbReference>
<dbReference type="RefSeq" id="WP_011795551.1">
    <property type="nucleotide sequence ID" value="NC_008752.1"/>
</dbReference>
<dbReference type="SMR" id="A1TPY4"/>
<dbReference type="STRING" id="397945.Aave_2447"/>
<dbReference type="GeneID" id="79792020"/>
<dbReference type="KEGG" id="aav:Aave_2447"/>
<dbReference type="eggNOG" id="COG0443">
    <property type="taxonomic scope" value="Bacteria"/>
</dbReference>
<dbReference type="HOGENOM" id="CLU_005965_2_1_4"/>
<dbReference type="OrthoDB" id="9766019at2"/>
<dbReference type="Proteomes" id="UP000002596">
    <property type="component" value="Chromosome"/>
</dbReference>
<dbReference type="GO" id="GO:0005524">
    <property type="term" value="F:ATP binding"/>
    <property type="evidence" value="ECO:0007669"/>
    <property type="project" value="UniProtKB-KW"/>
</dbReference>
<dbReference type="GO" id="GO:0016887">
    <property type="term" value="F:ATP hydrolysis activity"/>
    <property type="evidence" value="ECO:0007669"/>
    <property type="project" value="UniProtKB-UniRule"/>
</dbReference>
<dbReference type="GO" id="GO:0140662">
    <property type="term" value="F:ATP-dependent protein folding chaperone"/>
    <property type="evidence" value="ECO:0007669"/>
    <property type="project" value="InterPro"/>
</dbReference>
<dbReference type="GO" id="GO:0051082">
    <property type="term" value="F:unfolded protein binding"/>
    <property type="evidence" value="ECO:0007669"/>
    <property type="project" value="InterPro"/>
</dbReference>
<dbReference type="GO" id="GO:0016226">
    <property type="term" value="P:iron-sulfur cluster assembly"/>
    <property type="evidence" value="ECO:0007669"/>
    <property type="project" value="InterPro"/>
</dbReference>
<dbReference type="FunFam" id="3.30.420.40:FF:000046">
    <property type="entry name" value="Chaperone protein HscA"/>
    <property type="match status" value="1"/>
</dbReference>
<dbReference type="FunFam" id="2.60.34.10:FF:000005">
    <property type="entry name" value="Chaperone protein HscA homolog"/>
    <property type="match status" value="1"/>
</dbReference>
<dbReference type="Gene3D" id="1.20.1270.10">
    <property type="match status" value="1"/>
</dbReference>
<dbReference type="Gene3D" id="3.30.420.40">
    <property type="match status" value="2"/>
</dbReference>
<dbReference type="Gene3D" id="3.90.640.10">
    <property type="entry name" value="Actin, Chain A, domain 4"/>
    <property type="match status" value="1"/>
</dbReference>
<dbReference type="Gene3D" id="2.60.34.10">
    <property type="entry name" value="Substrate Binding Domain Of DNAk, Chain A, domain 1"/>
    <property type="match status" value="1"/>
</dbReference>
<dbReference type="HAMAP" id="MF_00679">
    <property type="entry name" value="HscA"/>
    <property type="match status" value="1"/>
</dbReference>
<dbReference type="InterPro" id="IPR043129">
    <property type="entry name" value="ATPase_NBD"/>
</dbReference>
<dbReference type="InterPro" id="IPR018181">
    <property type="entry name" value="Heat_shock_70_CS"/>
</dbReference>
<dbReference type="InterPro" id="IPR029048">
    <property type="entry name" value="HSP70_C_sf"/>
</dbReference>
<dbReference type="InterPro" id="IPR029047">
    <property type="entry name" value="HSP70_peptide-bd_sf"/>
</dbReference>
<dbReference type="InterPro" id="IPR013126">
    <property type="entry name" value="Hsp_70_fam"/>
</dbReference>
<dbReference type="InterPro" id="IPR010236">
    <property type="entry name" value="ISC_FeS_clus_asmbl_HscA"/>
</dbReference>
<dbReference type="NCBIfam" id="TIGR01991">
    <property type="entry name" value="HscA"/>
    <property type="match status" value="1"/>
</dbReference>
<dbReference type="NCBIfam" id="NF003520">
    <property type="entry name" value="PRK05183.1"/>
    <property type="match status" value="1"/>
</dbReference>
<dbReference type="PANTHER" id="PTHR19375">
    <property type="entry name" value="HEAT SHOCK PROTEIN 70KDA"/>
    <property type="match status" value="1"/>
</dbReference>
<dbReference type="Pfam" id="PF00012">
    <property type="entry name" value="HSP70"/>
    <property type="match status" value="1"/>
</dbReference>
<dbReference type="PRINTS" id="PR00301">
    <property type="entry name" value="HEATSHOCK70"/>
</dbReference>
<dbReference type="SUPFAM" id="SSF53067">
    <property type="entry name" value="Actin-like ATPase domain"/>
    <property type="match status" value="2"/>
</dbReference>
<dbReference type="SUPFAM" id="SSF100934">
    <property type="entry name" value="Heat shock protein 70kD (HSP70), C-terminal subdomain"/>
    <property type="match status" value="1"/>
</dbReference>
<dbReference type="SUPFAM" id="SSF100920">
    <property type="entry name" value="Heat shock protein 70kD (HSP70), peptide-binding domain"/>
    <property type="match status" value="1"/>
</dbReference>
<dbReference type="PROSITE" id="PS00297">
    <property type="entry name" value="HSP70_1"/>
    <property type="match status" value="1"/>
</dbReference>
<dbReference type="PROSITE" id="PS00329">
    <property type="entry name" value="HSP70_2"/>
    <property type="match status" value="1"/>
</dbReference>
<dbReference type="PROSITE" id="PS01036">
    <property type="entry name" value="HSP70_3"/>
    <property type="match status" value="1"/>
</dbReference>
<organism>
    <name type="scientific">Paracidovorax citrulli (strain AAC00-1)</name>
    <name type="common">Acidovorax citrulli</name>
    <dbReference type="NCBI Taxonomy" id="397945"/>
    <lineage>
        <taxon>Bacteria</taxon>
        <taxon>Pseudomonadati</taxon>
        <taxon>Pseudomonadota</taxon>
        <taxon>Betaproteobacteria</taxon>
        <taxon>Burkholderiales</taxon>
        <taxon>Comamonadaceae</taxon>
        <taxon>Paracidovorax</taxon>
    </lineage>
</organism>
<keyword id="KW-0067">ATP-binding</keyword>
<keyword id="KW-0143">Chaperone</keyword>
<keyword id="KW-0547">Nucleotide-binding</keyword>